<keyword id="KW-0687">Ribonucleoprotein</keyword>
<keyword id="KW-0689">Ribosomal protein</keyword>
<evidence type="ECO:0000255" key="1">
    <source>
        <dbReference type="HAMAP-Rule" id="MF_00368"/>
    </source>
</evidence>
<evidence type="ECO:0000305" key="2"/>
<sequence length="119" mass="12517">MTKEQIIEAVKSMTVLELNDLVKAIEEEFGVTAAAPVAVAGGAGEAAAEKTEFDVELTSAGAQKIKVIKVVREITGLGLKEAKELVDNTPKVIKEAAAKEEAEEIKAKLEEVGAAVEVK</sequence>
<organism>
    <name type="scientific">Bacillus cereus (strain B4264)</name>
    <dbReference type="NCBI Taxonomy" id="405532"/>
    <lineage>
        <taxon>Bacteria</taxon>
        <taxon>Bacillati</taxon>
        <taxon>Bacillota</taxon>
        <taxon>Bacilli</taxon>
        <taxon>Bacillales</taxon>
        <taxon>Bacillaceae</taxon>
        <taxon>Bacillus</taxon>
        <taxon>Bacillus cereus group</taxon>
    </lineage>
</organism>
<name>RL7_BACC4</name>
<dbReference type="EMBL" id="CP001176">
    <property type="protein sequence ID" value="ACK60935.1"/>
    <property type="molecule type" value="Genomic_DNA"/>
</dbReference>
<dbReference type="RefSeq" id="WP_000159736.1">
    <property type="nucleotide sequence ID" value="NZ_VEHB01000017.1"/>
</dbReference>
<dbReference type="SMR" id="B7HJ38"/>
<dbReference type="GeneID" id="93010953"/>
<dbReference type="KEGG" id="bcb:BCB4264_A0121"/>
<dbReference type="HOGENOM" id="CLU_086499_3_2_9"/>
<dbReference type="Proteomes" id="UP000007096">
    <property type="component" value="Chromosome"/>
</dbReference>
<dbReference type="GO" id="GO:0022625">
    <property type="term" value="C:cytosolic large ribosomal subunit"/>
    <property type="evidence" value="ECO:0007669"/>
    <property type="project" value="TreeGrafter"/>
</dbReference>
<dbReference type="GO" id="GO:0003729">
    <property type="term" value="F:mRNA binding"/>
    <property type="evidence" value="ECO:0007669"/>
    <property type="project" value="TreeGrafter"/>
</dbReference>
<dbReference type="GO" id="GO:0003735">
    <property type="term" value="F:structural constituent of ribosome"/>
    <property type="evidence" value="ECO:0007669"/>
    <property type="project" value="InterPro"/>
</dbReference>
<dbReference type="GO" id="GO:0006412">
    <property type="term" value="P:translation"/>
    <property type="evidence" value="ECO:0007669"/>
    <property type="project" value="UniProtKB-UniRule"/>
</dbReference>
<dbReference type="CDD" id="cd00387">
    <property type="entry name" value="Ribosomal_L7_L12"/>
    <property type="match status" value="1"/>
</dbReference>
<dbReference type="FunFam" id="1.20.5.710:FF:000002">
    <property type="entry name" value="50S ribosomal protein L7/L12"/>
    <property type="match status" value="1"/>
</dbReference>
<dbReference type="FunFam" id="3.30.1390.10:FF:000001">
    <property type="entry name" value="50S ribosomal protein L7/L12"/>
    <property type="match status" value="1"/>
</dbReference>
<dbReference type="Gene3D" id="3.30.1390.10">
    <property type="match status" value="1"/>
</dbReference>
<dbReference type="Gene3D" id="1.20.5.710">
    <property type="entry name" value="Single helix bin"/>
    <property type="match status" value="1"/>
</dbReference>
<dbReference type="HAMAP" id="MF_00368">
    <property type="entry name" value="Ribosomal_bL12"/>
    <property type="match status" value="1"/>
</dbReference>
<dbReference type="InterPro" id="IPR000206">
    <property type="entry name" value="Ribosomal_bL12"/>
</dbReference>
<dbReference type="InterPro" id="IPR013823">
    <property type="entry name" value="Ribosomal_bL12_C"/>
</dbReference>
<dbReference type="InterPro" id="IPR014719">
    <property type="entry name" value="Ribosomal_bL12_C/ClpS-like"/>
</dbReference>
<dbReference type="InterPro" id="IPR008932">
    <property type="entry name" value="Ribosomal_bL12_oligo"/>
</dbReference>
<dbReference type="InterPro" id="IPR036235">
    <property type="entry name" value="Ribosomal_bL12_oligo_N_sf"/>
</dbReference>
<dbReference type="NCBIfam" id="TIGR00855">
    <property type="entry name" value="L12"/>
    <property type="match status" value="1"/>
</dbReference>
<dbReference type="PANTHER" id="PTHR45987">
    <property type="entry name" value="39S RIBOSOMAL PROTEIN L12"/>
    <property type="match status" value="1"/>
</dbReference>
<dbReference type="PANTHER" id="PTHR45987:SF4">
    <property type="entry name" value="LARGE RIBOSOMAL SUBUNIT PROTEIN BL12M"/>
    <property type="match status" value="1"/>
</dbReference>
<dbReference type="Pfam" id="PF00542">
    <property type="entry name" value="Ribosomal_L12"/>
    <property type="match status" value="1"/>
</dbReference>
<dbReference type="Pfam" id="PF16320">
    <property type="entry name" value="Ribosomal_L12_N"/>
    <property type="match status" value="1"/>
</dbReference>
<dbReference type="SUPFAM" id="SSF54736">
    <property type="entry name" value="ClpS-like"/>
    <property type="match status" value="1"/>
</dbReference>
<dbReference type="SUPFAM" id="SSF48300">
    <property type="entry name" value="Ribosomal protein L7/12, oligomerisation (N-terminal) domain"/>
    <property type="match status" value="1"/>
</dbReference>
<feature type="chain" id="PRO_1000121390" description="Large ribosomal subunit protein bL12">
    <location>
        <begin position="1"/>
        <end position="119"/>
    </location>
</feature>
<proteinExistence type="inferred from homology"/>
<protein>
    <recommendedName>
        <fullName evidence="1">Large ribosomal subunit protein bL12</fullName>
    </recommendedName>
    <alternativeName>
        <fullName evidence="2">50S ribosomal protein L7/L12</fullName>
    </alternativeName>
</protein>
<gene>
    <name evidence="1" type="primary">rplL</name>
    <name type="ordered locus">BCB4264_A0121</name>
</gene>
<comment type="function">
    <text evidence="1">Forms part of the ribosomal stalk which helps the ribosome interact with GTP-bound translation factors. Is thus essential for accurate translation.</text>
</comment>
<comment type="subunit">
    <text evidence="1">Homodimer. Part of the ribosomal stalk of the 50S ribosomal subunit. Forms a multimeric L10(L12)X complex, where L10 forms an elongated spine to which 2 to 4 L12 dimers bind in a sequential fashion. Binds GTP-bound translation factors.</text>
</comment>
<comment type="similarity">
    <text evidence="1">Belongs to the bacterial ribosomal protein bL12 family.</text>
</comment>
<reference key="1">
    <citation type="submission" date="2008-10" db="EMBL/GenBank/DDBJ databases">
        <title>Genome sequence of Bacillus cereus B4264.</title>
        <authorList>
            <person name="Dodson R.J."/>
            <person name="Durkin A.S."/>
            <person name="Rosovitz M.J."/>
            <person name="Rasko D.A."/>
            <person name="Hoffmaster A."/>
            <person name="Ravel J."/>
            <person name="Sutton G."/>
        </authorList>
    </citation>
    <scope>NUCLEOTIDE SEQUENCE [LARGE SCALE GENOMIC DNA]</scope>
    <source>
        <strain>B4264</strain>
    </source>
</reference>
<accession>B7HJ38</accession>